<organism>
    <name type="scientific">Pseudomonas fluorescens (strain SBW25)</name>
    <dbReference type="NCBI Taxonomy" id="216595"/>
    <lineage>
        <taxon>Bacteria</taxon>
        <taxon>Pseudomonadati</taxon>
        <taxon>Pseudomonadota</taxon>
        <taxon>Gammaproteobacteria</taxon>
        <taxon>Pseudomonadales</taxon>
        <taxon>Pseudomonadaceae</taxon>
        <taxon>Pseudomonas</taxon>
    </lineage>
</organism>
<keyword id="KW-0012">Acyltransferase</keyword>
<keyword id="KW-0997">Cell inner membrane</keyword>
<keyword id="KW-1003">Cell membrane</keyword>
<keyword id="KW-0444">Lipid biosynthesis</keyword>
<keyword id="KW-0443">Lipid metabolism</keyword>
<keyword id="KW-0472">Membrane</keyword>
<keyword id="KW-0594">Phospholipid biosynthesis</keyword>
<keyword id="KW-1208">Phospholipid metabolism</keyword>
<keyword id="KW-0808">Transferase</keyword>
<protein>
    <recommendedName>
        <fullName evidence="1">Glycerol-3-phosphate acyltransferase</fullName>
        <shortName evidence="1">GPAT</shortName>
        <ecNumber evidence="1">2.3.1.15</ecNumber>
    </recommendedName>
</protein>
<reference key="1">
    <citation type="journal article" date="2009" name="Genome Biol.">
        <title>Genomic and genetic analyses of diversity and plant interactions of Pseudomonas fluorescens.</title>
        <authorList>
            <person name="Silby M.W."/>
            <person name="Cerdeno-Tarraga A.M."/>
            <person name="Vernikos G.S."/>
            <person name="Giddens S.R."/>
            <person name="Jackson R.W."/>
            <person name="Preston G.M."/>
            <person name="Zhang X.-X."/>
            <person name="Moon C.D."/>
            <person name="Gehrig S.M."/>
            <person name="Godfrey S.A.C."/>
            <person name="Knight C.G."/>
            <person name="Malone J.G."/>
            <person name="Robinson Z."/>
            <person name="Spiers A.J."/>
            <person name="Harris S."/>
            <person name="Challis G.L."/>
            <person name="Yaxley A.M."/>
            <person name="Harris D."/>
            <person name="Seeger K."/>
            <person name="Murphy L."/>
            <person name="Rutter S."/>
            <person name="Squares R."/>
            <person name="Quail M.A."/>
            <person name="Saunders E."/>
            <person name="Mavromatis K."/>
            <person name="Brettin T.S."/>
            <person name="Bentley S.D."/>
            <person name="Hothersall J."/>
            <person name="Stephens E."/>
            <person name="Thomas C.M."/>
            <person name="Parkhill J."/>
            <person name="Levy S.B."/>
            <person name="Rainey P.B."/>
            <person name="Thomson N.R."/>
        </authorList>
    </citation>
    <scope>NUCLEOTIDE SEQUENCE [LARGE SCALE GENOMIC DNA]</scope>
    <source>
        <strain>SBW25</strain>
    </source>
</reference>
<evidence type="ECO:0000255" key="1">
    <source>
        <dbReference type="HAMAP-Rule" id="MF_00393"/>
    </source>
</evidence>
<dbReference type="EC" id="2.3.1.15" evidence="1"/>
<dbReference type="EMBL" id="AM181176">
    <property type="protein sequence ID" value="CAY47512.1"/>
    <property type="molecule type" value="Genomic_DNA"/>
</dbReference>
<dbReference type="RefSeq" id="WP_012722581.1">
    <property type="nucleotide sequence ID" value="NC_012660.1"/>
</dbReference>
<dbReference type="SMR" id="C3K4R1"/>
<dbReference type="STRING" id="294.SRM1_01112"/>
<dbReference type="PATRIC" id="fig|216595.4.peg.1485"/>
<dbReference type="eggNOG" id="COG2937">
    <property type="taxonomic scope" value="Bacteria"/>
</dbReference>
<dbReference type="HOGENOM" id="CLU_015407_0_0_6"/>
<dbReference type="OrthoDB" id="335193at2"/>
<dbReference type="UniPathway" id="UPA00557">
    <property type="reaction ID" value="UER00612"/>
</dbReference>
<dbReference type="GO" id="GO:0005886">
    <property type="term" value="C:plasma membrane"/>
    <property type="evidence" value="ECO:0007669"/>
    <property type="project" value="UniProtKB-SubCell"/>
</dbReference>
<dbReference type="GO" id="GO:0004366">
    <property type="term" value="F:glycerol-3-phosphate O-acyltransferase activity"/>
    <property type="evidence" value="ECO:0007669"/>
    <property type="project" value="UniProtKB-UniRule"/>
</dbReference>
<dbReference type="GO" id="GO:0016024">
    <property type="term" value="P:CDP-diacylglycerol biosynthetic process"/>
    <property type="evidence" value="ECO:0007669"/>
    <property type="project" value="UniProtKB-UniRule"/>
</dbReference>
<dbReference type="GO" id="GO:0006631">
    <property type="term" value="P:fatty acid metabolic process"/>
    <property type="evidence" value="ECO:0007669"/>
    <property type="project" value="TreeGrafter"/>
</dbReference>
<dbReference type="CDD" id="cd07993">
    <property type="entry name" value="LPLAT_DHAPAT-like"/>
    <property type="match status" value="1"/>
</dbReference>
<dbReference type="HAMAP" id="MF_00393">
    <property type="entry name" value="Glyc3P_acyltrans"/>
    <property type="match status" value="1"/>
</dbReference>
<dbReference type="InterPro" id="IPR022284">
    <property type="entry name" value="GPAT/DHAPAT"/>
</dbReference>
<dbReference type="InterPro" id="IPR045520">
    <property type="entry name" value="GPAT/DHAPAT_C"/>
</dbReference>
<dbReference type="InterPro" id="IPR041728">
    <property type="entry name" value="GPAT/DHAPAT_LPLAT"/>
</dbReference>
<dbReference type="InterPro" id="IPR028354">
    <property type="entry name" value="GPAT_PlsB"/>
</dbReference>
<dbReference type="InterPro" id="IPR002123">
    <property type="entry name" value="Plipid/glycerol_acylTrfase"/>
</dbReference>
<dbReference type="NCBIfam" id="TIGR03703">
    <property type="entry name" value="plsB"/>
    <property type="match status" value="1"/>
</dbReference>
<dbReference type="NCBIfam" id="NF003441">
    <property type="entry name" value="PRK04974.1"/>
    <property type="match status" value="1"/>
</dbReference>
<dbReference type="PANTHER" id="PTHR12563:SF17">
    <property type="entry name" value="DIHYDROXYACETONE PHOSPHATE ACYLTRANSFERASE"/>
    <property type="match status" value="1"/>
</dbReference>
<dbReference type="PANTHER" id="PTHR12563">
    <property type="entry name" value="GLYCEROL-3-PHOSPHATE ACYLTRANSFERASE"/>
    <property type="match status" value="1"/>
</dbReference>
<dbReference type="Pfam" id="PF01553">
    <property type="entry name" value="Acyltransferase"/>
    <property type="match status" value="1"/>
</dbReference>
<dbReference type="Pfam" id="PF19277">
    <property type="entry name" value="GPAT_C"/>
    <property type="match status" value="1"/>
</dbReference>
<dbReference type="PIRSF" id="PIRSF500064">
    <property type="entry name" value="GPAT"/>
    <property type="match status" value="1"/>
</dbReference>
<dbReference type="PIRSF" id="PIRSF000437">
    <property type="entry name" value="GPAT_DHAPAT"/>
    <property type="match status" value="1"/>
</dbReference>
<dbReference type="SMART" id="SM00563">
    <property type="entry name" value="PlsC"/>
    <property type="match status" value="1"/>
</dbReference>
<dbReference type="SUPFAM" id="SSF69593">
    <property type="entry name" value="Glycerol-3-phosphate (1)-acyltransferase"/>
    <property type="match status" value="1"/>
</dbReference>
<comment type="catalytic activity">
    <reaction evidence="1">
        <text>sn-glycerol 3-phosphate + an acyl-CoA = a 1-acyl-sn-glycero-3-phosphate + CoA</text>
        <dbReference type="Rhea" id="RHEA:15325"/>
        <dbReference type="ChEBI" id="CHEBI:57287"/>
        <dbReference type="ChEBI" id="CHEBI:57597"/>
        <dbReference type="ChEBI" id="CHEBI:57970"/>
        <dbReference type="ChEBI" id="CHEBI:58342"/>
        <dbReference type="EC" id="2.3.1.15"/>
    </reaction>
</comment>
<comment type="pathway">
    <text evidence="1">Phospholipid metabolism; CDP-diacylglycerol biosynthesis; CDP-diacylglycerol from sn-glycerol 3-phosphate: step 1/3.</text>
</comment>
<comment type="subcellular location">
    <subcellularLocation>
        <location evidence="1">Cell inner membrane</location>
        <topology evidence="1">Peripheral membrane protein</topology>
        <orientation evidence="1">Cytoplasmic side</orientation>
    </subcellularLocation>
</comment>
<comment type="domain">
    <text evidence="1">The HXXXXD motif is essential for acyltransferase activity and may constitute the binding site for the phosphate moiety of the glycerol-3-phosphate.</text>
</comment>
<comment type="similarity">
    <text evidence="1">Belongs to the GPAT/DAPAT family.</text>
</comment>
<name>PLSB_PSEFS</name>
<proteinExistence type="inferred from homology"/>
<accession>C3K4R1</accession>
<gene>
    <name evidence="1" type="primary">plsB</name>
    <name type="ordered locus">PFLU_1255</name>
</gene>
<sequence length="839" mass="95386">MTRSPFRRLVFGTLRRLLYLWVRSETINQSSLTLNLDRSRPVFYVLQSPSLSELAVVDAECTKAGLPRPVLPVSVGPLMEPAAFFYLTPEPDWLGRQDKRGAPPTLTRLVNTLSEHAEENAQIIPVSVFWGQSPESESSPWKLLFADSWAVTGRLRRLLSILILGRKTRVQFSAPINLRELIEHNKGHERTVRMAQRILRVHFRNLKTAVIGPDLSHRRNLVKGLVNMPLVRQAIADEAEREKITPEKAKAQALRYGNEIASDYTYTAIRFLEVVLSWFWNKIYDGIKVNNIEGVQKVAQGYEVIYVPCHRSHIDYLLLSYLLFKNGLTPPHIAAGINLNMPVIGSLLRRGGAFFMRRTFKGNPLYTSVFNEYLHTLFTKGFPVEYFVEGGRSRTGRMLQPKTGMLAITLRSFLRSSRMPIVFVPVYIGYERVLEGRTYLGELRGASKKKESIFDIFKVVGALKQRFGQVAVNFGEPIKLAEFLDAEQPDWRSQELGPNYKPAWLNETTNRLGEQVARHLNEAAAVNPVNLVALALLSTTRLALDEQAMARQLDLYLALLRRVPYSPHTTLPDGDGLALIKHVKDMDLLSEQSDALGKILYLDEQNAVLMTYYRNNVLHIFALPALLASFFQSSSRMSRDQILRYTHALYPYLQSELFIRWSLDELDTVVDQWLEAFVEQGLLRFENNVYLRPAPSSRHFVLLTLLSKTVAQTLQRFYMAISLLLNSGQNSISAEELEDLCTIMAQRLSILHGLNAPEFFDKSLFRHFIQTLLEQDVLRRDEAGKLSYHDLLGELAEGAAKRVLPAEIRLSIRQVALHRVDGAAEAAVEPQPPKPEESR</sequence>
<feature type="chain" id="PRO_1000205852" description="Glycerol-3-phosphate acyltransferase">
    <location>
        <begin position="1"/>
        <end position="839"/>
    </location>
</feature>
<feature type="short sequence motif" description="HXXXXD motif">
    <location>
        <begin position="309"/>
        <end position="314"/>
    </location>
</feature>